<reference key="1">
    <citation type="submission" date="2008-06" db="EMBL/GenBank/DDBJ databases">
        <title>Lactobacillus casei BL23 complete genome sequence.</title>
        <authorList>
            <person name="Maze A."/>
            <person name="Boel G."/>
            <person name="Bourand A."/>
            <person name="Loux V."/>
            <person name="Gibrat J.F."/>
            <person name="Zuniga M."/>
            <person name="Hartke A."/>
            <person name="Deutscher J."/>
        </authorList>
    </citation>
    <scope>NUCLEOTIDE SEQUENCE [LARGE SCALE GENOMIC DNA]</scope>
    <source>
        <strain>BL23</strain>
    </source>
</reference>
<accession>B3WES8</accession>
<comment type="similarity">
    <text evidence="1">Belongs to the universal ribosomal protein uS2 family.</text>
</comment>
<gene>
    <name evidence="1" type="primary">rpsB</name>
    <name type="ordered locus">LCABL_17990</name>
</gene>
<organism>
    <name type="scientific">Lacticaseibacillus casei (strain BL23)</name>
    <name type="common">Lactobacillus casei</name>
    <dbReference type="NCBI Taxonomy" id="543734"/>
    <lineage>
        <taxon>Bacteria</taxon>
        <taxon>Bacillati</taxon>
        <taxon>Bacillota</taxon>
        <taxon>Bacilli</taxon>
        <taxon>Lactobacillales</taxon>
        <taxon>Lactobacillaceae</taxon>
        <taxon>Lacticaseibacillus</taxon>
    </lineage>
</organism>
<feature type="chain" id="PRO_1000115030" description="Small ribosomal subunit protein uS2">
    <location>
        <begin position="1"/>
        <end position="262"/>
    </location>
</feature>
<feature type="region of interest" description="Disordered" evidence="2">
    <location>
        <begin position="224"/>
        <end position="246"/>
    </location>
</feature>
<sequence>MAVLSMKQLLEAGVHFGHQTRRWNPKMKPYIFTERNGIYIIDLQKTVKMIDDAYNFVKEEAQNGGVFLFVGTKKQAQDAIAEEATRAGQYYVNHRWLGGTLTNWNTIQTRIKRLKDIKKMATDGTFDVLPKKEVSLLKKQQDKLEKFLGGIEDMPRIPDVLFIVDPRKEKIAVQEAQKLNIPIVAMVDTNTDPDDIDVIIPSNDDAIRAVRLITSKMADAIIEGNQGEDQDDAQEQQVAADKKADSMEDIVEAVEGDNKSAK</sequence>
<protein>
    <recommendedName>
        <fullName evidence="1">Small ribosomal subunit protein uS2</fullName>
    </recommendedName>
    <alternativeName>
        <fullName evidence="3">30S ribosomal protein S2</fullName>
    </alternativeName>
</protein>
<evidence type="ECO:0000255" key="1">
    <source>
        <dbReference type="HAMAP-Rule" id="MF_00291"/>
    </source>
</evidence>
<evidence type="ECO:0000256" key="2">
    <source>
        <dbReference type="SAM" id="MobiDB-lite"/>
    </source>
</evidence>
<evidence type="ECO:0000305" key="3"/>
<keyword id="KW-0687">Ribonucleoprotein</keyword>
<keyword id="KW-0689">Ribosomal protein</keyword>
<proteinExistence type="inferred from homology"/>
<dbReference type="EMBL" id="FM177140">
    <property type="protein sequence ID" value="CAQ66879.1"/>
    <property type="molecule type" value="Genomic_DNA"/>
</dbReference>
<dbReference type="SMR" id="B3WES8"/>
<dbReference type="KEGG" id="lcb:LCABL_17990"/>
<dbReference type="HOGENOM" id="CLU_040318_1_2_9"/>
<dbReference type="GO" id="GO:0022627">
    <property type="term" value="C:cytosolic small ribosomal subunit"/>
    <property type="evidence" value="ECO:0007669"/>
    <property type="project" value="TreeGrafter"/>
</dbReference>
<dbReference type="GO" id="GO:0003735">
    <property type="term" value="F:structural constituent of ribosome"/>
    <property type="evidence" value="ECO:0007669"/>
    <property type="project" value="InterPro"/>
</dbReference>
<dbReference type="GO" id="GO:0006412">
    <property type="term" value="P:translation"/>
    <property type="evidence" value="ECO:0007669"/>
    <property type="project" value="UniProtKB-UniRule"/>
</dbReference>
<dbReference type="CDD" id="cd01425">
    <property type="entry name" value="RPS2"/>
    <property type="match status" value="1"/>
</dbReference>
<dbReference type="FunFam" id="1.10.287.610:FF:000001">
    <property type="entry name" value="30S ribosomal protein S2"/>
    <property type="match status" value="1"/>
</dbReference>
<dbReference type="Gene3D" id="3.40.50.10490">
    <property type="entry name" value="Glucose-6-phosphate isomerase like protein, domain 1"/>
    <property type="match status" value="1"/>
</dbReference>
<dbReference type="Gene3D" id="1.10.287.610">
    <property type="entry name" value="Helix hairpin bin"/>
    <property type="match status" value="1"/>
</dbReference>
<dbReference type="HAMAP" id="MF_00291_B">
    <property type="entry name" value="Ribosomal_uS2_B"/>
    <property type="match status" value="1"/>
</dbReference>
<dbReference type="InterPro" id="IPR001865">
    <property type="entry name" value="Ribosomal_uS2"/>
</dbReference>
<dbReference type="InterPro" id="IPR005706">
    <property type="entry name" value="Ribosomal_uS2_bac/mit/plastid"/>
</dbReference>
<dbReference type="InterPro" id="IPR018130">
    <property type="entry name" value="Ribosomal_uS2_CS"/>
</dbReference>
<dbReference type="InterPro" id="IPR023591">
    <property type="entry name" value="Ribosomal_uS2_flav_dom_sf"/>
</dbReference>
<dbReference type="NCBIfam" id="TIGR01011">
    <property type="entry name" value="rpsB_bact"/>
    <property type="match status" value="1"/>
</dbReference>
<dbReference type="PANTHER" id="PTHR12534">
    <property type="entry name" value="30S RIBOSOMAL PROTEIN S2 PROKARYOTIC AND ORGANELLAR"/>
    <property type="match status" value="1"/>
</dbReference>
<dbReference type="PANTHER" id="PTHR12534:SF0">
    <property type="entry name" value="SMALL RIBOSOMAL SUBUNIT PROTEIN US2M"/>
    <property type="match status" value="1"/>
</dbReference>
<dbReference type="Pfam" id="PF00318">
    <property type="entry name" value="Ribosomal_S2"/>
    <property type="match status" value="1"/>
</dbReference>
<dbReference type="PRINTS" id="PR00395">
    <property type="entry name" value="RIBOSOMALS2"/>
</dbReference>
<dbReference type="SUPFAM" id="SSF52313">
    <property type="entry name" value="Ribosomal protein S2"/>
    <property type="match status" value="1"/>
</dbReference>
<dbReference type="PROSITE" id="PS00962">
    <property type="entry name" value="RIBOSOMAL_S2_1"/>
    <property type="match status" value="1"/>
</dbReference>
<dbReference type="PROSITE" id="PS00963">
    <property type="entry name" value="RIBOSOMAL_S2_2"/>
    <property type="match status" value="1"/>
</dbReference>
<name>RS2_LACCB</name>